<name>COXX_BRUC2</name>
<proteinExistence type="inferred from homology"/>
<comment type="function">
    <text evidence="1">Converts heme B (protoheme IX) to heme O by substitution of the vinyl group on carbon 2 of heme B porphyrin ring with a hydroxyethyl farnesyl side group.</text>
</comment>
<comment type="catalytic activity">
    <reaction evidence="1">
        <text>heme b + (2E,6E)-farnesyl diphosphate + H2O = Fe(II)-heme o + diphosphate</text>
        <dbReference type="Rhea" id="RHEA:28070"/>
        <dbReference type="ChEBI" id="CHEBI:15377"/>
        <dbReference type="ChEBI" id="CHEBI:33019"/>
        <dbReference type="ChEBI" id="CHEBI:60344"/>
        <dbReference type="ChEBI" id="CHEBI:60530"/>
        <dbReference type="ChEBI" id="CHEBI:175763"/>
        <dbReference type="EC" id="2.5.1.141"/>
    </reaction>
</comment>
<comment type="pathway">
    <text evidence="1">Porphyrin-containing compound metabolism; heme O biosynthesis; heme O from protoheme: step 1/1.</text>
</comment>
<comment type="subcellular location">
    <subcellularLocation>
        <location evidence="1">Cell inner membrane</location>
        <topology evidence="1">Multi-pass membrane protein</topology>
    </subcellularLocation>
</comment>
<comment type="miscellaneous">
    <text evidence="1">Carbon 2 of the heme B porphyrin ring is defined according to the Fischer nomenclature.</text>
</comment>
<comment type="similarity">
    <text evidence="1">Belongs to the UbiA prenyltransferase family. Protoheme IX farnesyltransferase subfamily.</text>
</comment>
<sequence length="315" mass="34405">MSLVEKNTASEDAFALSEATARDYLVLLKPRVMSLVVFTGLVGLVLAPGHMNPVLAVISILCIAVGAGASGALNMWYDADIDAVMKRTRKRPIPAGIIAPNQVLAFGLTLSAFSVMTLGLMVNWLAAALLAFTIFFYAVIYTMWLKRSTPQNIVIGGAAGAFPPMIGWAAATGEITWDSLVLFMIIFLWTPPHFWALSLFTTNDYEAARIPMMPNVKGELSTRRQALFYAVLMAPVGVLPWVMGFAGMFYGVVSTLLGLAFVYYAWRLWAADSQPQMLAAARKLFRFSLLYLAGIFAVLLFEALTFKLLAAFGVF</sequence>
<dbReference type="EC" id="2.5.1.141" evidence="1"/>
<dbReference type="EMBL" id="CP000872">
    <property type="protein sequence ID" value="ABX61557.1"/>
    <property type="molecule type" value="Genomic_DNA"/>
</dbReference>
<dbReference type="RefSeq" id="WP_004683128.1">
    <property type="nucleotide sequence ID" value="NC_010103.1"/>
</dbReference>
<dbReference type="SMR" id="A9M8Z3"/>
<dbReference type="KEGG" id="bcs:BCAN_A0475"/>
<dbReference type="HOGENOM" id="CLU_029631_0_2_5"/>
<dbReference type="PhylomeDB" id="A9M8Z3"/>
<dbReference type="UniPathway" id="UPA00834">
    <property type="reaction ID" value="UER00712"/>
</dbReference>
<dbReference type="Proteomes" id="UP000001385">
    <property type="component" value="Chromosome I"/>
</dbReference>
<dbReference type="GO" id="GO:0005886">
    <property type="term" value="C:plasma membrane"/>
    <property type="evidence" value="ECO:0007669"/>
    <property type="project" value="UniProtKB-SubCell"/>
</dbReference>
<dbReference type="GO" id="GO:0008495">
    <property type="term" value="F:protoheme IX farnesyltransferase activity"/>
    <property type="evidence" value="ECO:0007669"/>
    <property type="project" value="UniProtKB-UniRule"/>
</dbReference>
<dbReference type="GO" id="GO:0048034">
    <property type="term" value="P:heme O biosynthetic process"/>
    <property type="evidence" value="ECO:0007669"/>
    <property type="project" value="UniProtKB-UniRule"/>
</dbReference>
<dbReference type="CDD" id="cd13957">
    <property type="entry name" value="PT_UbiA_Cox10"/>
    <property type="match status" value="1"/>
</dbReference>
<dbReference type="FunFam" id="1.10.357.140:FF:000001">
    <property type="entry name" value="Protoheme IX farnesyltransferase"/>
    <property type="match status" value="1"/>
</dbReference>
<dbReference type="Gene3D" id="1.10.357.140">
    <property type="entry name" value="UbiA prenyltransferase"/>
    <property type="match status" value="1"/>
</dbReference>
<dbReference type="HAMAP" id="MF_00154">
    <property type="entry name" value="CyoE_CtaB"/>
    <property type="match status" value="1"/>
</dbReference>
<dbReference type="InterPro" id="IPR006369">
    <property type="entry name" value="Protohaem_IX_farnesylTrfase"/>
</dbReference>
<dbReference type="InterPro" id="IPR000537">
    <property type="entry name" value="UbiA_prenyltransferase"/>
</dbReference>
<dbReference type="InterPro" id="IPR030470">
    <property type="entry name" value="UbiA_prenylTrfase_CS"/>
</dbReference>
<dbReference type="InterPro" id="IPR044878">
    <property type="entry name" value="UbiA_sf"/>
</dbReference>
<dbReference type="NCBIfam" id="TIGR01473">
    <property type="entry name" value="cyoE_ctaB"/>
    <property type="match status" value="1"/>
</dbReference>
<dbReference type="NCBIfam" id="NF003349">
    <property type="entry name" value="PRK04375.1-2"/>
    <property type="match status" value="1"/>
</dbReference>
<dbReference type="PANTHER" id="PTHR43448:SF7">
    <property type="entry name" value="4-HYDROXYBENZOATE SOLANESYLTRANSFERASE"/>
    <property type="match status" value="1"/>
</dbReference>
<dbReference type="PANTHER" id="PTHR43448">
    <property type="entry name" value="PROTOHEME IX FARNESYLTRANSFERASE, MITOCHONDRIAL"/>
    <property type="match status" value="1"/>
</dbReference>
<dbReference type="Pfam" id="PF01040">
    <property type="entry name" value="UbiA"/>
    <property type="match status" value="1"/>
</dbReference>
<dbReference type="PROSITE" id="PS00943">
    <property type="entry name" value="UBIA"/>
    <property type="match status" value="1"/>
</dbReference>
<keyword id="KW-0997">Cell inner membrane</keyword>
<keyword id="KW-1003">Cell membrane</keyword>
<keyword id="KW-0350">Heme biosynthesis</keyword>
<keyword id="KW-0472">Membrane</keyword>
<keyword id="KW-1185">Reference proteome</keyword>
<keyword id="KW-0808">Transferase</keyword>
<keyword id="KW-0812">Transmembrane</keyword>
<keyword id="KW-1133">Transmembrane helix</keyword>
<accession>A9M8Z3</accession>
<protein>
    <recommendedName>
        <fullName evidence="1">Protoheme IX farnesyltransferase</fullName>
        <ecNumber evidence="1">2.5.1.141</ecNumber>
    </recommendedName>
    <alternativeName>
        <fullName evidence="1">Heme B farnesyltransferase</fullName>
    </alternativeName>
    <alternativeName>
        <fullName evidence="1">Heme O synthase</fullName>
    </alternativeName>
</protein>
<organism>
    <name type="scientific">Brucella canis (strain ATCC 23365 / NCTC 10854 / RM-666)</name>
    <dbReference type="NCBI Taxonomy" id="483179"/>
    <lineage>
        <taxon>Bacteria</taxon>
        <taxon>Pseudomonadati</taxon>
        <taxon>Pseudomonadota</taxon>
        <taxon>Alphaproteobacteria</taxon>
        <taxon>Hyphomicrobiales</taxon>
        <taxon>Brucellaceae</taxon>
        <taxon>Brucella/Ochrobactrum group</taxon>
        <taxon>Brucella</taxon>
    </lineage>
</organism>
<gene>
    <name evidence="1" type="primary">ctaB</name>
    <name type="ordered locus">BCAN_A0475</name>
</gene>
<evidence type="ECO:0000255" key="1">
    <source>
        <dbReference type="HAMAP-Rule" id="MF_00154"/>
    </source>
</evidence>
<feature type="chain" id="PRO_0000346031" description="Protoheme IX farnesyltransferase">
    <location>
        <begin position="1"/>
        <end position="315"/>
    </location>
</feature>
<feature type="transmembrane region" description="Helical" evidence="1">
    <location>
        <begin position="32"/>
        <end position="52"/>
    </location>
</feature>
<feature type="transmembrane region" description="Helical" evidence="1">
    <location>
        <begin position="53"/>
        <end position="73"/>
    </location>
</feature>
<feature type="transmembrane region" description="Helical" evidence="1">
    <location>
        <begin position="93"/>
        <end position="113"/>
    </location>
</feature>
<feature type="transmembrane region" description="Helical" evidence="1">
    <location>
        <begin position="120"/>
        <end position="140"/>
    </location>
</feature>
<feature type="transmembrane region" description="Helical" evidence="1">
    <location>
        <begin position="153"/>
        <end position="173"/>
    </location>
</feature>
<feature type="transmembrane region" description="Helical" evidence="1">
    <location>
        <begin position="180"/>
        <end position="200"/>
    </location>
</feature>
<feature type="transmembrane region" description="Helical" evidence="1">
    <location>
        <begin position="226"/>
        <end position="246"/>
    </location>
</feature>
<feature type="transmembrane region" description="Helical" evidence="1">
    <location>
        <begin position="249"/>
        <end position="269"/>
    </location>
</feature>
<feature type="transmembrane region" description="Helical" evidence="1">
    <location>
        <begin position="295"/>
        <end position="315"/>
    </location>
</feature>
<reference key="1">
    <citation type="submission" date="2007-10" db="EMBL/GenBank/DDBJ databases">
        <title>Brucella canis ATCC 23365 whole genome shotgun sequencing project.</title>
        <authorList>
            <person name="Setubal J.C."/>
            <person name="Bowns C."/>
            <person name="Boyle S."/>
            <person name="Crasta O.R."/>
            <person name="Czar M.J."/>
            <person name="Dharmanolla C."/>
            <person name="Gillespie J.J."/>
            <person name="Kenyon R.W."/>
            <person name="Lu J."/>
            <person name="Mane S."/>
            <person name="Mohapatra S."/>
            <person name="Nagrani S."/>
            <person name="Purkayastha A."/>
            <person name="Rajasimha H.K."/>
            <person name="Shallom J.M."/>
            <person name="Shallom S."/>
            <person name="Shukla M."/>
            <person name="Snyder E.E."/>
            <person name="Sobral B.W."/>
            <person name="Wattam A.R."/>
            <person name="Will R."/>
            <person name="Williams K."/>
            <person name="Yoo H."/>
            <person name="Bruce D."/>
            <person name="Detter C."/>
            <person name="Munk C."/>
            <person name="Brettin T.S."/>
        </authorList>
    </citation>
    <scope>NUCLEOTIDE SEQUENCE [LARGE SCALE GENOMIC DNA]</scope>
    <source>
        <strain>ATCC 23365 / NCTC 10854 / RM-666</strain>
    </source>
</reference>